<organism>
    <name type="scientific">Lysinibacillus sphaericus (strain C3-41)</name>
    <dbReference type="NCBI Taxonomy" id="444177"/>
    <lineage>
        <taxon>Bacteria</taxon>
        <taxon>Bacillati</taxon>
        <taxon>Bacillota</taxon>
        <taxon>Bacilli</taxon>
        <taxon>Bacillales</taxon>
        <taxon>Bacillaceae</taxon>
        <taxon>Lysinibacillus</taxon>
    </lineage>
</organism>
<keyword id="KW-0521">NADP</keyword>
<keyword id="KW-0560">Oxidoreductase</keyword>
<proteinExistence type="inferred from homology"/>
<accession>B1HNS5</accession>
<sequence length="327" mass="35680">MDNVFDYEDIQLIPAKCIVESRSECDTSVTLGGHTFKLPVVPANMQTIIDETLAKKLAENGYFYIMHRFQPEARVNFIQDMHGSGLIASISVGVKEEEYAFIEELAATNLVPEFITIDIAHGHSNAVIRMIQHIKKHLPNSFVIAGNVGTPEAVRELENAGADATKVGIGPGKVCITKIKTGFGTGGWQLAALRWCAKAATKPIIADGGIRTHGDIAKSVRFGASMVMIGSLFAGHEESPGQTIEVEGKKVKEYFGSASEFQKGERKNVEGKKMFVEHKGSIKDTLIEMQQDLQSSISYAGGTKLDAIRNVDYVIVKNSIFNGDKVY</sequence>
<reference key="1">
    <citation type="journal article" date="2008" name="J. Bacteriol.">
        <title>Complete genome sequence of the mosquitocidal bacterium Bacillus sphaericus C3-41 and comparison with those of closely related Bacillus species.</title>
        <authorList>
            <person name="Hu X."/>
            <person name="Fan W."/>
            <person name="Han B."/>
            <person name="Liu H."/>
            <person name="Zheng D."/>
            <person name="Li Q."/>
            <person name="Dong W."/>
            <person name="Yan J."/>
            <person name="Gao M."/>
            <person name="Berry C."/>
            <person name="Yuan Z."/>
        </authorList>
    </citation>
    <scope>NUCLEOTIDE SEQUENCE [LARGE SCALE GENOMIC DNA]</scope>
    <source>
        <strain>C3-41</strain>
    </source>
</reference>
<protein>
    <recommendedName>
        <fullName evidence="1">GMP reductase</fullName>
        <ecNumber evidence="1">1.7.1.7</ecNumber>
    </recommendedName>
    <alternativeName>
        <fullName evidence="1">Guanosine 5'-monophosphate oxidoreductase</fullName>
        <shortName evidence="1">Guanosine monophosphate reductase</shortName>
    </alternativeName>
</protein>
<name>GUAC_LYSSC</name>
<feature type="chain" id="PRO_1000146140" description="GMP reductase">
    <location>
        <begin position="1"/>
        <end position="327"/>
    </location>
</feature>
<feature type="active site" description="Thioimidate intermediate" evidence="1">
    <location>
        <position position="175"/>
    </location>
</feature>
<feature type="binding site" evidence="1">
    <location>
        <begin position="204"/>
        <end position="227"/>
    </location>
    <ligand>
        <name>NADP(+)</name>
        <dbReference type="ChEBI" id="CHEBI:58349"/>
    </ligand>
</feature>
<comment type="function">
    <text evidence="1">Catalyzes the irreversible NADPH-dependent deamination of GMP to IMP. It functions in the conversion of nucleobase, nucleoside and nucleotide derivatives of G to A nucleotides, and in maintaining the intracellular balance of A and G nucleotides.</text>
</comment>
<comment type="catalytic activity">
    <reaction evidence="1">
        <text>IMP + NH4(+) + NADP(+) = GMP + NADPH + 2 H(+)</text>
        <dbReference type="Rhea" id="RHEA:17185"/>
        <dbReference type="ChEBI" id="CHEBI:15378"/>
        <dbReference type="ChEBI" id="CHEBI:28938"/>
        <dbReference type="ChEBI" id="CHEBI:57783"/>
        <dbReference type="ChEBI" id="CHEBI:58053"/>
        <dbReference type="ChEBI" id="CHEBI:58115"/>
        <dbReference type="ChEBI" id="CHEBI:58349"/>
        <dbReference type="EC" id="1.7.1.7"/>
    </reaction>
</comment>
<comment type="similarity">
    <text evidence="1">Belongs to the IMPDH/GMPR family. GuaC type 2 subfamily.</text>
</comment>
<dbReference type="EC" id="1.7.1.7" evidence="1"/>
<dbReference type="EMBL" id="CP000817">
    <property type="protein sequence ID" value="ACA42138.1"/>
    <property type="molecule type" value="Genomic_DNA"/>
</dbReference>
<dbReference type="RefSeq" id="WP_012296139.1">
    <property type="nucleotide sequence ID" value="NC_010382.1"/>
</dbReference>
<dbReference type="SMR" id="B1HNS5"/>
<dbReference type="EnsemblBacteria" id="ACA42138">
    <property type="protein sequence ID" value="ACA42138"/>
    <property type="gene ID" value="Bsph_4694"/>
</dbReference>
<dbReference type="KEGG" id="lsp:Bsph_4694"/>
<dbReference type="HOGENOM" id="CLU_022552_5_0_9"/>
<dbReference type="Proteomes" id="UP000002164">
    <property type="component" value="Chromosome"/>
</dbReference>
<dbReference type="GO" id="GO:0005829">
    <property type="term" value="C:cytosol"/>
    <property type="evidence" value="ECO:0007669"/>
    <property type="project" value="TreeGrafter"/>
</dbReference>
<dbReference type="GO" id="GO:1902560">
    <property type="term" value="C:GMP reductase complex"/>
    <property type="evidence" value="ECO:0007669"/>
    <property type="project" value="InterPro"/>
</dbReference>
<dbReference type="GO" id="GO:0003920">
    <property type="term" value="F:GMP reductase activity"/>
    <property type="evidence" value="ECO:0007669"/>
    <property type="project" value="UniProtKB-UniRule"/>
</dbReference>
<dbReference type="GO" id="GO:0006163">
    <property type="term" value="P:purine nucleotide metabolic process"/>
    <property type="evidence" value="ECO:0007669"/>
    <property type="project" value="UniProtKB-UniRule"/>
</dbReference>
<dbReference type="CDD" id="cd00381">
    <property type="entry name" value="IMPDH"/>
    <property type="match status" value="1"/>
</dbReference>
<dbReference type="FunFam" id="3.20.20.70:FF:000079">
    <property type="entry name" value="GMP reductase"/>
    <property type="match status" value="1"/>
</dbReference>
<dbReference type="Gene3D" id="3.20.20.70">
    <property type="entry name" value="Aldolase class I"/>
    <property type="match status" value="1"/>
</dbReference>
<dbReference type="HAMAP" id="MF_01511">
    <property type="entry name" value="GMP_reduct_type2"/>
    <property type="match status" value="1"/>
</dbReference>
<dbReference type="InterPro" id="IPR013785">
    <property type="entry name" value="Aldolase_TIM"/>
</dbReference>
<dbReference type="InterPro" id="IPR050139">
    <property type="entry name" value="GMP_reductase"/>
</dbReference>
<dbReference type="InterPro" id="IPR005994">
    <property type="entry name" value="GuaC_type_2"/>
</dbReference>
<dbReference type="InterPro" id="IPR015875">
    <property type="entry name" value="IMP_DH/GMP_Rdtase_CS"/>
</dbReference>
<dbReference type="InterPro" id="IPR001093">
    <property type="entry name" value="IMP_DH_GMPRt"/>
</dbReference>
<dbReference type="NCBIfam" id="TIGR01306">
    <property type="entry name" value="GMP_reduct_2"/>
    <property type="match status" value="1"/>
</dbReference>
<dbReference type="NCBIfam" id="NF003966">
    <property type="entry name" value="PRK05458.1"/>
    <property type="match status" value="1"/>
</dbReference>
<dbReference type="PANTHER" id="PTHR43170">
    <property type="entry name" value="GMP REDUCTASE"/>
    <property type="match status" value="1"/>
</dbReference>
<dbReference type="PANTHER" id="PTHR43170:SF5">
    <property type="entry name" value="GMP REDUCTASE"/>
    <property type="match status" value="1"/>
</dbReference>
<dbReference type="Pfam" id="PF00478">
    <property type="entry name" value="IMPDH"/>
    <property type="match status" value="1"/>
</dbReference>
<dbReference type="PIRSF" id="PIRSF036500">
    <property type="entry name" value="GMP_red_Firmic"/>
    <property type="match status" value="1"/>
</dbReference>
<dbReference type="SMART" id="SM01240">
    <property type="entry name" value="IMPDH"/>
    <property type="match status" value="1"/>
</dbReference>
<dbReference type="SUPFAM" id="SSF51412">
    <property type="entry name" value="Inosine monophosphate dehydrogenase (IMPDH)"/>
    <property type="match status" value="1"/>
</dbReference>
<dbReference type="PROSITE" id="PS00487">
    <property type="entry name" value="IMP_DH_GMP_RED"/>
    <property type="match status" value="1"/>
</dbReference>
<evidence type="ECO:0000255" key="1">
    <source>
        <dbReference type="HAMAP-Rule" id="MF_01511"/>
    </source>
</evidence>
<gene>
    <name evidence="1" type="primary">guaC</name>
    <name type="ordered locus">Bsph_4694</name>
</gene>